<feature type="chain" id="PRO_1000065233" description="Regulatory protein RecX">
    <location>
        <begin position="1"/>
        <end position="182"/>
    </location>
</feature>
<feature type="region of interest" description="Disordered" evidence="2">
    <location>
        <begin position="12"/>
        <end position="54"/>
    </location>
</feature>
<feature type="compositionally biased region" description="Basic and acidic residues" evidence="2">
    <location>
        <begin position="13"/>
        <end position="24"/>
    </location>
</feature>
<feature type="compositionally biased region" description="Polar residues" evidence="2">
    <location>
        <begin position="43"/>
        <end position="54"/>
    </location>
</feature>
<reference key="1">
    <citation type="journal article" date="2007" name="PLoS Genet.">
        <title>The complete genome sequence of Yersinia pseudotuberculosis IP31758, the causative agent of Far East scarlet-like fever.</title>
        <authorList>
            <person name="Eppinger M."/>
            <person name="Rosovitz M.J."/>
            <person name="Fricke W.F."/>
            <person name="Rasko D.A."/>
            <person name="Kokorina G."/>
            <person name="Fayolle C."/>
            <person name="Lindler L.E."/>
            <person name="Carniel E."/>
            <person name="Ravel J."/>
        </authorList>
    </citation>
    <scope>NUCLEOTIDE SEQUENCE [LARGE SCALE GENOMIC DNA]</scope>
    <source>
        <strain>IP 31758</strain>
    </source>
</reference>
<accession>A7FLR8</accession>
<organism>
    <name type="scientific">Yersinia pseudotuberculosis serotype O:1b (strain IP 31758)</name>
    <dbReference type="NCBI Taxonomy" id="349747"/>
    <lineage>
        <taxon>Bacteria</taxon>
        <taxon>Pseudomonadati</taxon>
        <taxon>Pseudomonadota</taxon>
        <taxon>Gammaproteobacteria</taxon>
        <taxon>Enterobacterales</taxon>
        <taxon>Yersiniaceae</taxon>
        <taxon>Yersinia</taxon>
    </lineage>
</organism>
<sequence length="182" mass="21102">MNDQLSRAMRLLSQRDHSESELRRKLAAPPFSAKGNWGKRSGAKSSNLVESNPVESNLAESNAIEESDPQVIEQVIDYCYQHNWLDDSRFAASYINSRSRKGYGVQRIRSELMQKGVDKERILAAFENSEIDWCQLAKEVAQRKFSETLPVEWKEKAKVQRYLLYRGFFQEEIQSIYTDSVE</sequence>
<comment type="function">
    <text evidence="1">Modulates RecA activity.</text>
</comment>
<comment type="subcellular location">
    <subcellularLocation>
        <location evidence="1">Cytoplasm</location>
    </subcellularLocation>
</comment>
<comment type="similarity">
    <text evidence="1">Belongs to the RecX family.</text>
</comment>
<gene>
    <name evidence="1" type="primary">recX</name>
    <name type="ordered locus">YpsIP31758_3239</name>
</gene>
<evidence type="ECO:0000255" key="1">
    <source>
        <dbReference type="HAMAP-Rule" id="MF_01114"/>
    </source>
</evidence>
<evidence type="ECO:0000256" key="2">
    <source>
        <dbReference type="SAM" id="MobiDB-lite"/>
    </source>
</evidence>
<protein>
    <recommendedName>
        <fullName evidence="1">Regulatory protein RecX</fullName>
    </recommendedName>
</protein>
<keyword id="KW-0963">Cytoplasm</keyword>
<dbReference type="EMBL" id="CP000720">
    <property type="protein sequence ID" value="ABS48008.1"/>
    <property type="molecule type" value="Genomic_DNA"/>
</dbReference>
<dbReference type="RefSeq" id="WP_011191807.1">
    <property type="nucleotide sequence ID" value="NC_009708.1"/>
</dbReference>
<dbReference type="SMR" id="A7FLR8"/>
<dbReference type="KEGG" id="ypi:YpsIP31758_3239"/>
<dbReference type="HOGENOM" id="CLU_066607_3_2_6"/>
<dbReference type="Proteomes" id="UP000002412">
    <property type="component" value="Chromosome"/>
</dbReference>
<dbReference type="GO" id="GO:0005737">
    <property type="term" value="C:cytoplasm"/>
    <property type="evidence" value="ECO:0007669"/>
    <property type="project" value="UniProtKB-SubCell"/>
</dbReference>
<dbReference type="GO" id="GO:0006282">
    <property type="term" value="P:regulation of DNA repair"/>
    <property type="evidence" value="ECO:0007669"/>
    <property type="project" value="UniProtKB-UniRule"/>
</dbReference>
<dbReference type="Gene3D" id="1.10.10.10">
    <property type="entry name" value="Winged helix-like DNA-binding domain superfamily/Winged helix DNA-binding domain"/>
    <property type="match status" value="3"/>
</dbReference>
<dbReference type="HAMAP" id="MF_01114">
    <property type="entry name" value="RecX"/>
    <property type="match status" value="1"/>
</dbReference>
<dbReference type="InterPro" id="IPR053924">
    <property type="entry name" value="RecX_HTH_2nd"/>
</dbReference>
<dbReference type="InterPro" id="IPR053925">
    <property type="entry name" value="RecX_HTH_3rd"/>
</dbReference>
<dbReference type="InterPro" id="IPR003783">
    <property type="entry name" value="Regulatory_RecX"/>
</dbReference>
<dbReference type="InterPro" id="IPR036388">
    <property type="entry name" value="WH-like_DNA-bd_sf"/>
</dbReference>
<dbReference type="NCBIfam" id="NF001053">
    <property type="entry name" value="PRK00117.1-3"/>
    <property type="match status" value="1"/>
</dbReference>
<dbReference type="PANTHER" id="PTHR33602">
    <property type="entry name" value="REGULATORY PROTEIN RECX FAMILY PROTEIN"/>
    <property type="match status" value="1"/>
</dbReference>
<dbReference type="PANTHER" id="PTHR33602:SF1">
    <property type="entry name" value="REGULATORY PROTEIN RECX FAMILY PROTEIN"/>
    <property type="match status" value="1"/>
</dbReference>
<dbReference type="Pfam" id="PF02631">
    <property type="entry name" value="RecX_HTH2"/>
    <property type="match status" value="1"/>
</dbReference>
<dbReference type="Pfam" id="PF21981">
    <property type="entry name" value="RecX_HTH3"/>
    <property type="match status" value="1"/>
</dbReference>
<name>RECX_YERP3</name>
<proteinExistence type="inferred from homology"/>